<proteinExistence type="evidence at protein level"/>
<protein>
    <recommendedName>
        <fullName>Bleomycin hydrolase</fullName>
        <shortName>BH</shortName>
        <shortName>BLM hydrolase</shortName>
        <shortName>BMH</shortName>
        <ecNumber>3.4.22.40</ecNumber>
    </recommendedName>
</protein>
<organism>
    <name type="scientific">Rattus norvegicus</name>
    <name type="common">Rat</name>
    <dbReference type="NCBI Taxonomy" id="10116"/>
    <lineage>
        <taxon>Eukaryota</taxon>
        <taxon>Metazoa</taxon>
        <taxon>Chordata</taxon>
        <taxon>Craniata</taxon>
        <taxon>Vertebrata</taxon>
        <taxon>Euteleostomi</taxon>
        <taxon>Mammalia</taxon>
        <taxon>Eutheria</taxon>
        <taxon>Euarchontoglires</taxon>
        <taxon>Glires</taxon>
        <taxon>Rodentia</taxon>
        <taxon>Myomorpha</taxon>
        <taxon>Muroidea</taxon>
        <taxon>Muridae</taxon>
        <taxon>Murinae</taxon>
        <taxon>Rattus</taxon>
    </lineage>
</organism>
<gene>
    <name type="primary">Blmh</name>
</gene>
<keyword id="KW-0007">Acetylation</keyword>
<keyword id="KW-0963">Cytoplasm</keyword>
<keyword id="KW-0903">Direct protein sequencing</keyword>
<keyword id="KW-0378">Hydrolase</keyword>
<keyword id="KW-0645">Protease</keyword>
<keyword id="KW-1185">Reference proteome</keyword>
<keyword id="KW-0788">Thiol protease</keyword>
<name>BLMH_RAT</name>
<sequence length="454" mass="52323">MNNAGLNSEKVAALIQKLNSDPQFVLAQNVGTTHDLLDICLKRATVQGAQHVFQHVVPQEGKPVTNQKSSGRCWIFSCLNVMRLPFMKKFNIEEFEFSQSYLFFWDKVERCYFFLNAFVDTAQKKEPEDGRLVQYLLMNPTNDGGQWDMLVNIVEKYGVVPKKCFPESHTTEATRRMNDILNHKMREFCIRLRNLVHSGATKGEISSTQDAMMEEIFRVVCICLGNPPETFTWEYRDKDKNYHKVGPITPLQFYKEHVKPLFNMEDKICFVNDPRPQHKYNKLYTVDYLSNMVGGRKTLYNNQPIDFLKKMVAASIRDGEAVWFGCDVGKHFNGKLGLSDMNVYDHELVFGVSLKNMNKAERLAFGESLMTHAMTFTAVSEKDDQEGAFVKWRVENSWGEDHGHKGYLCMTDEWFSEYVYEVVVDKKHVPEEVLAVLEQEPIVLPAWDPMGALA</sequence>
<dbReference type="EC" id="3.4.22.40"/>
<dbReference type="EMBL" id="D87336">
    <property type="protein sequence ID" value="BAA13333.1"/>
    <property type="molecule type" value="mRNA"/>
</dbReference>
<dbReference type="PIR" id="JC4886">
    <property type="entry name" value="JC4886"/>
</dbReference>
<dbReference type="SMR" id="P70645"/>
<dbReference type="FunCoup" id="P70645">
    <property type="interactions" value="2612"/>
</dbReference>
<dbReference type="IntAct" id="P70645">
    <property type="interactions" value="1"/>
</dbReference>
<dbReference type="STRING" id="10116.ENSRNOP00000005125"/>
<dbReference type="MEROPS" id="C01.084"/>
<dbReference type="iPTMnet" id="P70645"/>
<dbReference type="PhosphoSitePlus" id="P70645"/>
<dbReference type="jPOST" id="P70645"/>
<dbReference type="PaxDb" id="10116-ENSRNOP00000005125"/>
<dbReference type="PeptideAtlas" id="P70645"/>
<dbReference type="AGR" id="RGD:1304668"/>
<dbReference type="RGD" id="1304668">
    <property type="gene designation" value="Blmh"/>
</dbReference>
<dbReference type="eggNOG" id="KOG4128">
    <property type="taxonomic scope" value="Eukaryota"/>
</dbReference>
<dbReference type="InParanoid" id="P70645"/>
<dbReference type="OMA" id="QSYTFFW"/>
<dbReference type="BRENDA" id="3.4.22.40">
    <property type="organism ID" value="5301"/>
</dbReference>
<dbReference type="Reactome" id="R-RNO-983168">
    <property type="pathway name" value="Antigen processing: Ubiquitination &amp; Proteasome degradation"/>
</dbReference>
<dbReference type="PRO" id="PR:P70645"/>
<dbReference type="Proteomes" id="UP000002494">
    <property type="component" value="Unplaced"/>
</dbReference>
<dbReference type="GO" id="GO:0005737">
    <property type="term" value="C:cytoplasm"/>
    <property type="evidence" value="ECO:0000250"/>
    <property type="project" value="UniProtKB"/>
</dbReference>
<dbReference type="GO" id="GO:0004177">
    <property type="term" value="F:aminopeptidase activity"/>
    <property type="evidence" value="ECO:0000266"/>
    <property type="project" value="RGD"/>
</dbReference>
<dbReference type="GO" id="GO:0070005">
    <property type="term" value="F:cysteine-type aminopeptidase activity"/>
    <property type="evidence" value="ECO:0007669"/>
    <property type="project" value="InterPro"/>
</dbReference>
<dbReference type="GO" id="GO:0004197">
    <property type="term" value="F:cysteine-type endopeptidase activity"/>
    <property type="evidence" value="ECO:0007669"/>
    <property type="project" value="UniProtKB-EC"/>
</dbReference>
<dbReference type="GO" id="GO:0008234">
    <property type="term" value="F:cysteine-type peptidase activity"/>
    <property type="evidence" value="ECO:0000318"/>
    <property type="project" value="GO_Central"/>
</dbReference>
<dbReference type="GO" id="GO:0042802">
    <property type="term" value="F:identical protein binding"/>
    <property type="evidence" value="ECO:0000266"/>
    <property type="project" value="RGD"/>
</dbReference>
<dbReference type="GO" id="GO:0008233">
    <property type="term" value="F:peptidase activity"/>
    <property type="evidence" value="ECO:0000266"/>
    <property type="project" value="RGD"/>
</dbReference>
<dbReference type="GO" id="GO:0043418">
    <property type="term" value="P:homocysteine catabolic process"/>
    <property type="evidence" value="ECO:0000318"/>
    <property type="project" value="GO_Central"/>
</dbReference>
<dbReference type="GO" id="GO:0006508">
    <property type="term" value="P:proteolysis"/>
    <property type="evidence" value="ECO:0007669"/>
    <property type="project" value="UniProtKB-KW"/>
</dbReference>
<dbReference type="GO" id="GO:0009636">
    <property type="term" value="P:response to toxic substance"/>
    <property type="evidence" value="ECO:0000266"/>
    <property type="project" value="RGD"/>
</dbReference>
<dbReference type="GO" id="GO:0009410">
    <property type="term" value="P:response to xenobiotic stimulus"/>
    <property type="evidence" value="ECO:0000266"/>
    <property type="project" value="RGD"/>
</dbReference>
<dbReference type="CDD" id="cd00585">
    <property type="entry name" value="Peptidase_C1B"/>
    <property type="match status" value="1"/>
</dbReference>
<dbReference type="FunFam" id="3.90.70.10:FF:000021">
    <property type="entry name" value="Bleomycin hydrolase"/>
    <property type="match status" value="1"/>
</dbReference>
<dbReference type="Gene3D" id="3.90.70.10">
    <property type="entry name" value="Cysteine proteinases"/>
    <property type="match status" value="1"/>
</dbReference>
<dbReference type="InterPro" id="IPR038765">
    <property type="entry name" value="Papain-like_cys_pep_sf"/>
</dbReference>
<dbReference type="InterPro" id="IPR000169">
    <property type="entry name" value="Pept_cys_AS"/>
</dbReference>
<dbReference type="InterPro" id="IPR004134">
    <property type="entry name" value="Peptidase_C1B"/>
</dbReference>
<dbReference type="PANTHER" id="PTHR10363">
    <property type="entry name" value="BLEOMYCIN HYDROLASE"/>
    <property type="match status" value="1"/>
</dbReference>
<dbReference type="PANTHER" id="PTHR10363:SF2">
    <property type="entry name" value="BLEOMYCIN HYDROLASE"/>
    <property type="match status" value="1"/>
</dbReference>
<dbReference type="Pfam" id="PF03051">
    <property type="entry name" value="Peptidase_C1_2"/>
    <property type="match status" value="1"/>
</dbReference>
<dbReference type="PIRSF" id="PIRSF005700">
    <property type="entry name" value="PepC"/>
    <property type="match status" value="1"/>
</dbReference>
<dbReference type="SUPFAM" id="SSF54001">
    <property type="entry name" value="Cysteine proteinases"/>
    <property type="match status" value="1"/>
</dbReference>
<dbReference type="PROSITE" id="PS00139">
    <property type="entry name" value="THIOL_PROTEASE_CYS"/>
    <property type="match status" value="1"/>
</dbReference>
<evidence type="ECO:0000250" key="1"/>
<evidence type="ECO:0000250" key="2">
    <source>
        <dbReference type="UniProtKB" id="Q13867"/>
    </source>
</evidence>
<evidence type="ECO:0000255" key="3">
    <source>
        <dbReference type="PROSITE-ProRule" id="PRU10088"/>
    </source>
</evidence>
<evidence type="ECO:0000269" key="4">
    <source>
    </source>
</evidence>
<comment type="function">
    <text evidence="1">The normal physiological role of BLM hydrolase is unknown, but it catalyzes the inactivation of the antitumor drug BLM (a glycopeptide) by hydrolyzing the carboxamide bond of its B-aminoalaninamide moiety thus protecting normal and malignant cells from BLM toxicity (By similarity). Binds single-stranded DNA with higher affinity than double-stranded DNA. May play an important role in the metabolism of antibiotics.</text>
</comment>
<comment type="catalytic activity">
    <reaction>
        <text>Inactivates bleomycin B2 (a cytotoxic glycometallopeptide) by hydrolysis of a carboxyamide bond of beta-aminoalanine, but also shows general aminopeptidase activity. The specificity varies somewhat with source, but amino acid arylamides of Met, Leu and Ala are preferred.</text>
        <dbReference type="EC" id="3.4.22.40"/>
    </reaction>
</comment>
<comment type="biophysicochemical properties">
    <phDependence>
        <text>Optimum pH is 7.5.</text>
    </phDependence>
</comment>
<comment type="subunit">
    <text evidence="2">Homohexamer (By similarity). Interacts with NUDT12 (via ANK repeats) (By similarity).</text>
</comment>
<comment type="subcellular location">
    <subcellularLocation>
        <location evidence="2">Cytoplasm</location>
    </subcellularLocation>
    <subcellularLocation>
        <location evidence="2">Cytoplasmic granule</location>
    </subcellularLocation>
    <text evidence="2">Co-localizes with NUDT12 in the cytoplasmic granules.</text>
</comment>
<comment type="tissue specificity">
    <text>Expressed at relatively higher levels in the stomach, esophagus, spleen, thymus and testis, and at lower levels in the skin, lung and skeletal muscle.</text>
</comment>
<comment type="similarity">
    <text evidence="3">Belongs to the peptidase C1 family.</text>
</comment>
<feature type="chain" id="PRO_0000050553" description="Bleomycin hydrolase">
    <location>
        <begin position="1"/>
        <end position="454"/>
    </location>
</feature>
<feature type="active site" evidence="3">
    <location>
        <position position="73"/>
    </location>
</feature>
<feature type="active site" evidence="3">
    <location>
        <position position="372"/>
    </location>
</feature>
<feature type="active site" evidence="3">
    <location>
        <position position="396"/>
    </location>
</feature>
<feature type="modified residue" description="N-acetylmethionine" evidence="4">
    <location>
        <position position="1"/>
    </location>
</feature>
<feature type="modified residue" description="N6-acetyllysine" evidence="2">
    <location>
        <position position="391"/>
    </location>
</feature>
<reference key="1">
    <citation type="journal article" date="1996" name="J. Biochem.">
        <title>Cloning and analysis of cDNA encoding rat bleomycin hydrolase, a DNA-binding cysteine protease.</title>
        <authorList>
            <person name="Takeda A."/>
            <person name="Masuda Y."/>
            <person name="Yamamoto T."/>
            <person name="Hirabayashi T."/>
            <person name="Nakamura Y."/>
            <person name="Nakaya K."/>
        </authorList>
    </citation>
    <scope>NUCLEOTIDE SEQUENCE [MRNA]</scope>
    <scope>PROTEIN SEQUENCE OF 44-62; 165-175 AND 283-296</scope>
    <source>
        <tissue>Spleen</tissue>
    </source>
</reference>
<reference key="2">
    <citation type="journal article" date="1996" name="J. Biochem.">
        <title>Purification and characterization of bleomycin hydrolase, which represents a new family of cysteine proteases, from rat skin.</title>
        <authorList>
            <person name="Takeda A."/>
            <person name="Higuchi D."/>
            <person name="Yamamoto T."/>
            <person name="Nakamura Y."/>
            <person name="Masuda Y."/>
            <person name="Hirabayashi T."/>
            <person name="Nakaya K."/>
        </authorList>
    </citation>
    <scope>PROTEIN SEQUENCE OF 1-10</scope>
    <scope>ACETYLATION AT MET-1</scope>
    <scope>CHARACTERIZATION</scope>
    <source>
        <tissue>Skin</tissue>
    </source>
</reference>
<accession>P70645</accession>